<keyword id="KW-0017">Alkaloid metabolism</keyword>
<keyword id="KW-0963">Cytoplasm</keyword>
<keyword id="KW-0326">Glycosidase</keyword>
<keyword id="KW-0378">Hydrolase</keyword>
<keyword id="KW-0808">Transferase</keyword>
<dbReference type="EC" id="3.2.1.220" evidence="5"/>
<dbReference type="EC" id="3.2.1.105" evidence="5"/>
<dbReference type="EMBL" id="AB455576">
    <property type="protein sequence ID" value="BAH02544.1"/>
    <property type="molecule type" value="mRNA"/>
</dbReference>
<dbReference type="CAZy" id="GH1">
    <property type="family name" value="Glycoside Hydrolase Family 1"/>
</dbReference>
<dbReference type="KEGG" id="ag:BAH02544"/>
<dbReference type="BioCyc" id="MetaCyc:MONOMER-17756"/>
<dbReference type="BRENDA" id="3.2.1.21">
    <property type="organism ID" value="11125"/>
</dbReference>
<dbReference type="BRENDA" id="3.2.1.B16">
    <property type="organism ID" value="11125"/>
</dbReference>
<dbReference type="GO" id="GO:0005829">
    <property type="term" value="C:cytosol"/>
    <property type="evidence" value="ECO:0000314"/>
    <property type="project" value="UniProtKB"/>
</dbReference>
<dbReference type="GO" id="GO:0008422">
    <property type="term" value="F:beta-glucosidase activity"/>
    <property type="evidence" value="ECO:0000314"/>
    <property type="project" value="UniProtKB"/>
</dbReference>
<dbReference type="GO" id="GO:0009251">
    <property type="term" value="P:glucan catabolic process"/>
    <property type="evidence" value="ECO:0000314"/>
    <property type="project" value="UniProtKB"/>
</dbReference>
<dbReference type="GO" id="GO:0033075">
    <property type="term" value="P:isoquinoline alkaloid biosynthetic process"/>
    <property type="evidence" value="ECO:0000314"/>
    <property type="project" value="UniProtKB"/>
</dbReference>
<dbReference type="FunFam" id="3.20.20.80:FF:000022">
    <property type="entry name" value="Beta-glucosidase 11"/>
    <property type="match status" value="1"/>
</dbReference>
<dbReference type="Gene3D" id="3.20.20.80">
    <property type="entry name" value="Glycosidases"/>
    <property type="match status" value="1"/>
</dbReference>
<dbReference type="InterPro" id="IPR001360">
    <property type="entry name" value="Glyco_hydro_1"/>
</dbReference>
<dbReference type="InterPro" id="IPR033132">
    <property type="entry name" value="Glyco_hydro_1_N_CS"/>
</dbReference>
<dbReference type="InterPro" id="IPR017853">
    <property type="entry name" value="Glycoside_hydrolase_SF"/>
</dbReference>
<dbReference type="PANTHER" id="PTHR10353">
    <property type="entry name" value="GLYCOSYL HYDROLASE"/>
    <property type="match status" value="1"/>
</dbReference>
<dbReference type="PANTHER" id="PTHR10353:SF137">
    <property type="entry name" value="MYROSINASE 3-RELATED"/>
    <property type="match status" value="1"/>
</dbReference>
<dbReference type="Pfam" id="PF00232">
    <property type="entry name" value="Glyco_hydro_1"/>
    <property type="match status" value="2"/>
</dbReference>
<dbReference type="PRINTS" id="PR00131">
    <property type="entry name" value="GLHYDRLASE1"/>
</dbReference>
<dbReference type="SUPFAM" id="SSF51445">
    <property type="entry name" value="(Trans)glycosidases"/>
    <property type="match status" value="1"/>
</dbReference>
<dbReference type="PROSITE" id="PS00653">
    <property type="entry name" value="GLYCOSYL_HYDROL_F1_2"/>
    <property type="match status" value="1"/>
</dbReference>
<evidence type="ECO:0000250" key="1">
    <source>
        <dbReference type="UniProtKB" id="Q1XH05"/>
    </source>
</evidence>
<evidence type="ECO:0000250" key="2">
    <source>
        <dbReference type="UniProtKB" id="Q7XSK0"/>
    </source>
</evidence>
<evidence type="ECO:0000250" key="3">
    <source>
        <dbReference type="UniProtKB" id="Q8L7J2"/>
    </source>
</evidence>
<evidence type="ECO:0000250" key="4">
    <source>
        <dbReference type="UniProtKB" id="Q9SPP9"/>
    </source>
</evidence>
<evidence type="ECO:0000269" key="5">
    <source>
    </source>
</evidence>
<evidence type="ECO:0000269" key="6">
    <source>
    </source>
</evidence>
<evidence type="ECO:0000303" key="7">
    <source>
    </source>
</evidence>
<evidence type="ECO:0000305" key="8"/>
<evidence type="ECO:0000312" key="9">
    <source>
        <dbReference type="EMBL" id="BAH02544.1"/>
    </source>
</evidence>
<proteinExistence type="evidence at protein level"/>
<gene>
    <name evidence="7" type="primary">GLU1</name>
</gene>
<reference evidence="9" key="1">
    <citation type="journal article" date="2008" name="J. Biol. Chem.">
        <title>The new beta-D-glucosidase in terpenoid-isoquinoline alkaloid biosynthesis in Psychotria ipecacuanha.</title>
        <authorList>
            <person name="Nomura T."/>
            <person name="Quesada A.L."/>
            <person name="Kutchan T.M."/>
        </authorList>
    </citation>
    <scope>NUCLEOTIDE SEQUENCE [MRNA]</scope>
    <scope>FUNCTION</scope>
    <scope>CATALYTIC ACTIVITY</scope>
    <scope>PATHWAY</scope>
    <scope>BIOPHYSICOCHEMICAL PROPERTIES</scope>
    <scope>ACTIVITY REGULATION</scope>
    <source>
        <tissue>Root</tissue>
        <tissue>Shoot</tissue>
    </source>
</reference>
<reference key="2">
    <citation type="journal article" date="2010" name="J. Biol. Chem.">
        <title>Three new O-methyltransferases are sufficient for all O-methylation reactions of ipecac alkaloid biosynthesis in root culture of Psychotria ipecacuanha.</title>
        <authorList>
            <person name="Nomura T."/>
            <person name="Kutchan T.M."/>
        </authorList>
    </citation>
    <scope>SUBCELLULAR LOCATION</scope>
    <scope>TISSUE SPECIFICITY</scope>
    <source>
        <tissue>Root</tissue>
    </source>
</reference>
<feature type="chain" id="PRO_0000462222" description="Ipecoside beta-D-glucosidase IpeGLU1">
    <location>
        <begin position="1"/>
        <end position="543"/>
    </location>
</feature>
<feature type="active site" description="Proton donor" evidence="2">
    <location>
        <position position="186"/>
    </location>
</feature>
<feature type="active site" description="Nucleophile" evidence="2">
    <location>
        <position position="422"/>
    </location>
</feature>
<feature type="binding site" evidence="4">
    <location>
        <position position="36"/>
    </location>
    <ligand>
        <name>a beta-D-glucoside</name>
        <dbReference type="ChEBI" id="CHEBI:22798"/>
    </ligand>
</feature>
<feature type="binding site" evidence="4">
    <location>
        <position position="140"/>
    </location>
    <ligand>
        <name>a beta-D-glucoside</name>
        <dbReference type="ChEBI" id="CHEBI:22798"/>
    </ligand>
</feature>
<feature type="binding site" evidence="4">
    <location>
        <begin position="185"/>
        <end position="186"/>
    </location>
    <ligand>
        <name>a beta-D-glucoside</name>
        <dbReference type="ChEBI" id="CHEBI:22798"/>
    </ligand>
</feature>
<feature type="binding site" evidence="3">
    <location>
        <position position="350"/>
    </location>
    <ligand>
        <name>a beta-D-glucoside</name>
        <dbReference type="ChEBI" id="CHEBI:22798"/>
    </ligand>
</feature>
<feature type="binding site" evidence="4">
    <location>
        <position position="422"/>
    </location>
    <ligand>
        <name>a beta-D-glucoside</name>
        <dbReference type="ChEBI" id="CHEBI:22798"/>
    </ligand>
</feature>
<feature type="binding site" evidence="4">
    <location>
        <position position="471"/>
    </location>
    <ligand>
        <name>a beta-D-glucoside</name>
        <dbReference type="ChEBI" id="CHEBI:22798"/>
    </ligand>
</feature>
<feature type="binding site" evidence="1">
    <location>
        <position position="487"/>
    </location>
    <ligand>
        <name>a beta-D-glucoside</name>
        <dbReference type="ChEBI" id="CHEBI:22798"/>
    </ligand>
</feature>
<feature type="site" description="Controls the gate shape and acceptance of substrates" evidence="4">
    <location>
        <position position="394"/>
    </location>
</feature>
<accession>B6ZKM3</accession>
<protein>
    <recommendedName>
        <fullName evidence="7">Ipecoside beta-D-glucosidase IpeGLU1</fullName>
        <ecNumber evidence="5">3.2.1.220</ecNumber>
    </recommendedName>
    <alternativeName>
        <fullName evidence="7">Ipecac alkaloid beta-glucosidase 1</fullName>
        <shortName evidence="7 9">IpeGLU1</shortName>
    </alternativeName>
    <alternativeName>
        <fullName evidence="7">Strictosidine beta-glucosidase IpeGLU1</fullName>
        <ecNumber evidence="5">3.2.1.105</ecNumber>
    </alternativeName>
</protein>
<name>GLU1_CARIP</name>
<sequence length="543" mass="61795">MSSVLPTPVLPTPGRNINRGHFPDDFIFGAGTSSYQIEGAAREGGRGPSIWDTFTHTHPELIQDGSNGDTAINSYNLYKEDIKIVKLMGLDAYRFSISWPRILPGGSINAGINQEGIKYYNNLIDELLANDIVPYVTLFHWDVPQALQDQYDGFLSDKIVDDFRDFAELCFWEFGDRVKNWITINEPESYSNFFGVAYDTPPKAHALKASRLLVPTTVARPSKPVRVFASTADPGTTTADQVYKVGHNLLLAHAAAIQVYRDKFQNTQEGTFGMALVTQWMKPLNENNPADVEAASRAFDFKFGWFMQPLITGEYPKSMRQLLGPRLREFTPDQKKLLIGSYDYVGVNYYTATYVSSAQPPHDKKKAVFHTDGNFYTTDSKDGVLIGPLAGPAWLNIVPEGIYHVLQDIKENYEDPVIYITENGVYEVNDTAKTLSEARVDTTRLHYLQDHLSKVLEARHQGVRVQGYLVWSLMDNWELRAGYTSRFGLIHIDYYNNFARYPKDSAIWFRNAFHKRLRIHVNKARPQEDDGAFDTPRKRLRKY</sequence>
<comment type="function">
    <text evidence="5">Beta-glucosidase involved in the biosynthesis of ipecac and benzylisoquinoline monoterpenoid-isoquinoline alkaloids natural products, starting by the condensation of dopamine and secologanin, and including emetine and cephaeline, drugs used both as anti-protozoal (e.g. treatment of ameobiasis) and as emetic agents (PubMed:18927081). In response to pathogen and herbivore attack, triggers the release of toxic ipecoside aglycon to trigger defense responses (PubMed:18927081). Catalyzes deglucosylation both on (1S)-diastereomer and (1R)-diastereomer substrates, including ipecoside, the main alkaloidal glucoside (PubMed:18927081). Also active on N-deacetylisoipecoside, 6-O-methyl-N-deacetylisoipecoside, 6-O-methyl-N-deacetylipecoside and N-deacetylipecoside (PubMed:18927081).</text>
</comment>
<comment type="catalytic activity">
    <reaction evidence="5">
        <text>deacetylipecoside + H2O = deacetylipecoside aglycone + D-glucose</text>
        <dbReference type="Rhea" id="RHEA:78763"/>
        <dbReference type="ChEBI" id="CHEBI:4167"/>
        <dbReference type="ChEBI" id="CHEBI:15377"/>
        <dbReference type="ChEBI" id="CHEBI:58379"/>
        <dbReference type="ChEBI" id="CHEBI:229554"/>
        <dbReference type="EC" id="3.2.1.220"/>
    </reaction>
    <physiologicalReaction direction="left-to-right" evidence="5">
        <dbReference type="Rhea" id="RHEA:78764"/>
    </physiologicalReaction>
</comment>
<comment type="catalytic activity">
    <reaction evidence="5">
        <text>deacetylisoipecoside + H2O = deacetylisoipecoside aglycone + D-glucose</text>
        <dbReference type="Rhea" id="RHEA:78887"/>
        <dbReference type="ChEBI" id="CHEBI:4167"/>
        <dbReference type="ChEBI" id="CHEBI:15377"/>
        <dbReference type="ChEBI" id="CHEBI:58091"/>
        <dbReference type="ChEBI" id="CHEBI:229557"/>
    </reaction>
    <physiologicalReaction direction="left-to-right" evidence="5">
        <dbReference type="Rhea" id="RHEA:78888"/>
    </physiologicalReaction>
</comment>
<comment type="catalytic activity">
    <reaction evidence="5">
        <text>6-O-methyldeacetylipecoside + H2O = 6-O-methyldeacetylipecoside aglycone + D-glucose</text>
        <dbReference type="Rhea" id="RHEA:78883"/>
        <dbReference type="ChEBI" id="CHEBI:4167"/>
        <dbReference type="ChEBI" id="CHEBI:15377"/>
        <dbReference type="ChEBI" id="CHEBI:229558"/>
        <dbReference type="ChEBI" id="CHEBI:229559"/>
        <dbReference type="EC" id="3.2.1.220"/>
    </reaction>
    <physiologicalReaction direction="left-to-right" evidence="5">
        <dbReference type="Rhea" id="RHEA:78884"/>
    </physiologicalReaction>
</comment>
<comment type="catalytic activity">
    <reaction evidence="5">
        <text>6-O-methyldeacetylisoipecoside + H2O = 6-O-methyldeacetylisoipecoside aglycone + D-glucose</text>
        <dbReference type="Rhea" id="RHEA:78891"/>
        <dbReference type="ChEBI" id="CHEBI:4167"/>
        <dbReference type="ChEBI" id="CHEBI:15377"/>
        <dbReference type="ChEBI" id="CHEBI:229555"/>
        <dbReference type="ChEBI" id="CHEBI:229556"/>
    </reaction>
    <physiologicalReaction direction="left-to-right" evidence="5">
        <dbReference type="Rhea" id="RHEA:78892"/>
    </physiologicalReaction>
</comment>
<comment type="catalytic activity">
    <reaction evidence="5">
        <text>ipecoside + H2O = ipecoside aglycone + D-glucose</text>
        <dbReference type="Rhea" id="RHEA:78743"/>
        <dbReference type="ChEBI" id="CHEBI:4167"/>
        <dbReference type="ChEBI" id="CHEBI:5952"/>
        <dbReference type="ChEBI" id="CHEBI:15377"/>
        <dbReference type="ChEBI" id="CHEBI:195262"/>
        <dbReference type="EC" id="3.2.1.220"/>
    </reaction>
    <physiologicalReaction direction="left-to-right" evidence="5">
        <dbReference type="Rhea" id="RHEA:78744"/>
    </physiologicalReaction>
</comment>
<comment type="catalytic activity">
    <reaction evidence="5">
        <text>3alpha(S)-strictosidine + H2O = strictosidine aglycone + D-glucose</text>
        <dbReference type="Rhea" id="RHEA:12917"/>
        <dbReference type="ChEBI" id="CHEBI:4167"/>
        <dbReference type="ChEBI" id="CHEBI:15377"/>
        <dbReference type="ChEBI" id="CHEBI:58012"/>
        <dbReference type="ChEBI" id="CHEBI:58193"/>
        <dbReference type="EC" id="3.2.1.105"/>
    </reaction>
    <physiologicalReaction direction="left-to-right" evidence="5">
        <dbReference type="Rhea" id="RHEA:12918"/>
    </physiologicalReaction>
</comment>
<comment type="activity regulation">
    <text evidence="5">Inhibited by Cu(2+), Fe(2+) and Zn(2+).</text>
</comment>
<comment type="biophysicochemical properties">
    <kinetics>
        <KM evidence="5">0.32 mM for N-deacetylipecoside</KM>
        <KM evidence="5">5.8 mM for N-deacetylisoipecoside</KM>
        <KM evidence="5">0.39 mM for 6-O-methyl-N-deacetylipecoside</KM>
        <KM evidence="5">1.3 mM for 6-O-methyl-N-deacetylisoipecoside</KM>
        <KM evidence="5">12.7 mM for 7-O-methyl-N-deacetylipecoside</KM>
        <KM evidence="5">25.5 mM for 7-O-methyl-N-deacetylisoipecoside</KM>
        <KM evidence="5">13.5 mM for 6,7-O,O-dimethyl-N-deacetylipecoside</KM>
        <KM evidence="5">35 mM for 6,7-O,O-Dimethyl-N-deacetylisoipecoside</KM>
        <KM evidence="5">0.1 mM for ipecoside</KM>
        <KM evidence="5">0.19 mM for strictosidine</KM>
        <KM evidence="5">0.29 mM for vincoside</KM>
        <KM evidence="5">26.5 mM for secologanin</KM>
        <KM evidence="5">33.2 mM for loganin</KM>
        <KM evidence="5">65.1 mM for galloyl-glucose</KM>
        <KM evidence="5">21.5 mM for p-nitrophenyl-beta-glucose</KM>
        <Vmax evidence="5">25.577 nmol/min/mg enzyme with N-deacetylipecoside as substrate</Vmax>
        <Vmax evidence="5">78.19 nmol/min/mg enzyme with N-deacetylisoipecoside as substrate</Vmax>
        <Vmax evidence="5">28.157 nmol/min/mg enzyme with 6-O-methyl-N-deacetylipecoside as substrate</Vmax>
        <Vmax evidence="5">16.906 nmol/min/mg enzyme with 6-O-methyl-N-deacetylisoipecoside as substrate</Vmax>
        <Vmax evidence="5">45.58 nmol/min/mg enzyme with 7-O-methyl-N-deacetylipecoside as substrate</Vmax>
        <Vmax evidence="5">22.727 nmol/min/mg enzyme with 7-O-methyl-N-deacetylisoipecoside as substrate</Vmax>
        <Vmax evidence="5">35.732 nmol/min/mg enzyme with 6,7-O,O-dimethyl-N-deacetylipecoside as substrate</Vmax>
        <Vmax evidence="5">21.989 nmol/min/mg enzyme with 6,7-O,O-Dimethyl-N-deacetylisoipecoside as substrate</Vmax>
        <Vmax evidence="5">46.729 nmol/min/mg enzyme with ipecoside as substrate</Vmax>
        <Vmax evidence="5">1.945 nmol/min/mg enzyme with strictosidine as substrate</Vmax>
        <Vmax evidence="5">5.786 nmol/min/mg enzyme with vincoside as substrate</Vmax>
        <Vmax evidence="5">30.303 nmol/min/mg enzyme with secologanin as substrate</Vmax>
        <Vmax evidence="5">19.881 nmol/min/mg enzyme with loganin as substrate</Vmax>
        <Vmax evidence="5">6.024 nmol/min/mg enzyme with galloyl-glucose as substrate</Vmax>
        <Vmax evidence="5">3.546 nmol/min/mg enzyme with p-nitrophenyl-beta-glucose as substrate</Vmax>
        <text evidence="5">kcat is 28.2 sec(-1) with N-deacetylipecoside as substrate (PubMed:18927081). kcat is 86.3 sec(-1) with N-deacetylisoipecoside as substrate (PubMed:18927081). kcat is 31.1 sec(-1) with 6-O-methyl-N-deacetylipecoside as substrate (PubMed:18927081). kcat is 18.7 sec(-1) with 6-O-methyl-N-deacetylisoipecoside as substrate (PubMed:18927081). kcat is 50.3 sec(-1) with 7-O-methyl-N-deacetylipecoside as substrate (PubMed:18927081). kcat is 25.1 sec(-1) with 7-O-methyl-N-deacetylisoipecoside as substrate (PubMed:18927081). kcat is 39.4 sec(-1) with 6,7-O,O-dimethyl-N-deacetylipecoside as substrate (PubMed:18927081). kcat is 24.3 sec(-1) with 6,7-O,O-Dimethyl-N-deacetylisoipecoside as substrate (PubMed:18927081). kcat is 51.6 sec(-1) with ipecoside as substrate (PubMed:18927081). kcat is 2.1 sec(-1) with strictosidine as substrate (PubMed:18927081). kcat is 6.4 sec(-1) with vincoside as substrate (PubMed:18927081). kcat is 33.4 sec(-1) with secologanin as substrate (PubMed:18927081). kcat is 21.9 sec(-1) with loganin as substrate (PubMed:18927081). kcat is 6.6 sec(-1) with galloyl-glucose as substrate (PubMed:18927081). kcat is 3.9 sec(-1) with p-nitrophenyl-beta-glucose as substrate (PubMed:18927081).</text>
    </kinetics>
    <phDependence>
        <text evidence="5">Optimum pH is 5 with N-deacetylisoipecoside and N-deacetylipecoside as substrates.</text>
    </phDependence>
    <temperatureDependence>
        <text evidence="5">Optimum temperature is 55-60 degrees Celsius.</text>
    </temperatureDependence>
</comment>
<comment type="pathway">
    <text evidence="5">Alkaloid biosynthesis.</text>
</comment>
<comment type="subcellular location">
    <subcellularLocation>
        <location evidence="6">Cytoplasm</location>
        <location evidence="6">Cytosol</location>
    </subcellularLocation>
</comment>
<comment type="tissue specificity">
    <text evidence="6">Expressed in roots.</text>
</comment>
<comment type="similarity">
    <text evidence="8">Belongs to the glycosyl hydrolase 1 family.</text>
</comment>
<organism>
    <name type="scientific">Carapichea ipecacuanha</name>
    <name type="common">Ipecac</name>
    <name type="synonym">Callicocca ipecacuanha</name>
    <dbReference type="NCBI Taxonomy" id="77880"/>
    <lineage>
        <taxon>Eukaryota</taxon>
        <taxon>Viridiplantae</taxon>
        <taxon>Streptophyta</taxon>
        <taxon>Embryophyta</taxon>
        <taxon>Tracheophyta</taxon>
        <taxon>Spermatophyta</taxon>
        <taxon>Magnoliopsida</taxon>
        <taxon>eudicotyledons</taxon>
        <taxon>Gunneridae</taxon>
        <taxon>Pentapetalae</taxon>
        <taxon>asterids</taxon>
        <taxon>lamiids</taxon>
        <taxon>Gentianales</taxon>
        <taxon>Rubiaceae</taxon>
        <taxon>Rubioideae</taxon>
        <taxon>Palicoureeae</taxon>
        <taxon>Carapichea</taxon>
    </lineage>
</organism>